<reference key="1">
    <citation type="journal article" date="2006" name="J. Bacteriol.">
        <title>Pathogenomic sequence analysis of Bacillus cereus and Bacillus thuringiensis isolates closely related to Bacillus anthracis.</title>
        <authorList>
            <person name="Han C.S."/>
            <person name="Xie G."/>
            <person name="Challacombe J.F."/>
            <person name="Altherr M.R."/>
            <person name="Bhotika S.S."/>
            <person name="Bruce D."/>
            <person name="Campbell C.S."/>
            <person name="Campbell M.L."/>
            <person name="Chen J."/>
            <person name="Chertkov O."/>
            <person name="Cleland C."/>
            <person name="Dimitrijevic M."/>
            <person name="Doggett N.A."/>
            <person name="Fawcett J.J."/>
            <person name="Glavina T."/>
            <person name="Goodwin L.A."/>
            <person name="Hill K.K."/>
            <person name="Hitchcock P."/>
            <person name="Jackson P.J."/>
            <person name="Keim P."/>
            <person name="Kewalramani A.R."/>
            <person name="Longmire J."/>
            <person name="Lucas S."/>
            <person name="Malfatti S."/>
            <person name="McMurry K."/>
            <person name="Meincke L.J."/>
            <person name="Misra M."/>
            <person name="Moseman B.L."/>
            <person name="Mundt M."/>
            <person name="Munk A.C."/>
            <person name="Okinaka R.T."/>
            <person name="Parson-Quintana B."/>
            <person name="Reilly L.P."/>
            <person name="Richardson P."/>
            <person name="Robinson D.L."/>
            <person name="Rubin E."/>
            <person name="Saunders E."/>
            <person name="Tapia R."/>
            <person name="Tesmer J.G."/>
            <person name="Thayer N."/>
            <person name="Thompson L.S."/>
            <person name="Tice H."/>
            <person name="Ticknor L.O."/>
            <person name="Wills P.L."/>
            <person name="Brettin T.S."/>
            <person name="Gilna P."/>
        </authorList>
    </citation>
    <scope>NUCLEOTIDE SEQUENCE [LARGE SCALE GENOMIC DNA]</scope>
    <source>
        <strain>ZK / E33L</strain>
    </source>
</reference>
<feature type="chain" id="PRO_0000230467" description="Small ribosomal subunit protein uS13">
    <location>
        <begin position="1"/>
        <end position="121"/>
    </location>
</feature>
<feature type="region of interest" description="Disordered" evidence="2">
    <location>
        <begin position="91"/>
        <end position="121"/>
    </location>
</feature>
<feature type="compositionally biased region" description="Basic residues" evidence="2">
    <location>
        <begin position="106"/>
        <end position="121"/>
    </location>
</feature>
<accession>Q63H66</accession>
<name>RS13_BACCZ</name>
<comment type="function">
    <text evidence="1">Located at the top of the head of the 30S subunit, it contacts several helices of the 16S rRNA. In the 70S ribosome it contacts the 23S rRNA (bridge B1a) and protein L5 of the 50S subunit (bridge B1b), connecting the 2 subunits; these bridges are implicated in subunit movement. Contacts the tRNAs in the A and P-sites.</text>
</comment>
<comment type="subunit">
    <text evidence="1">Part of the 30S ribosomal subunit. Forms a loose heterodimer with protein S19. Forms two bridges to the 50S subunit in the 70S ribosome.</text>
</comment>
<comment type="similarity">
    <text evidence="1">Belongs to the universal ribosomal protein uS13 family.</text>
</comment>
<sequence>MARIAGVDIPRDKRVVISLTYVFGIGRTTAEKILAEAGISEETRVRDLTEDELGRIRDIIDRIKVEGDLRREVSLNIKRLMEIGSYRGLRHRRGLPVRGQNSKNNARTRKGPRRTVANKKK</sequence>
<evidence type="ECO:0000255" key="1">
    <source>
        <dbReference type="HAMAP-Rule" id="MF_01315"/>
    </source>
</evidence>
<evidence type="ECO:0000256" key="2">
    <source>
        <dbReference type="SAM" id="MobiDB-lite"/>
    </source>
</evidence>
<evidence type="ECO:0000305" key="3"/>
<dbReference type="EMBL" id="CP000001">
    <property type="protein sequence ID" value="AAU20103.1"/>
    <property type="molecule type" value="Genomic_DNA"/>
</dbReference>
<dbReference type="RefSeq" id="WP_000090788.1">
    <property type="nucleotide sequence ID" value="NZ_CP009968.1"/>
</dbReference>
<dbReference type="SMR" id="Q63H66"/>
<dbReference type="GeneID" id="93010918"/>
<dbReference type="KEGG" id="bcz:BCE33L0128"/>
<dbReference type="PATRIC" id="fig|288681.22.peg.22"/>
<dbReference type="Proteomes" id="UP000002612">
    <property type="component" value="Chromosome"/>
</dbReference>
<dbReference type="GO" id="GO:0005829">
    <property type="term" value="C:cytosol"/>
    <property type="evidence" value="ECO:0007669"/>
    <property type="project" value="TreeGrafter"/>
</dbReference>
<dbReference type="GO" id="GO:0015935">
    <property type="term" value="C:small ribosomal subunit"/>
    <property type="evidence" value="ECO:0007669"/>
    <property type="project" value="TreeGrafter"/>
</dbReference>
<dbReference type="GO" id="GO:0019843">
    <property type="term" value="F:rRNA binding"/>
    <property type="evidence" value="ECO:0007669"/>
    <property type="project" value="UniProtKB-UniRule"/>
</dbReference>
<dbReference type="GO" id="GO:0003735">
    <property type="term" value="F:structural constituent of ribosome"/>
    <property type="evidence" value="ECO:0007669"/>
    <property type="project" value="InterPro"/>
</dbReference>
<dbReference type="GO" id="GO:0000049">
    <property type="term" value="F:tRNA binding"/>
    <property type="evidence" value="ECO:0007669"/>
    <property type="project" value="UniProtKB-UniRule"/>
</dbReference>
<dbReference type="GO" id="GO:0006412">
    <property type="term" value="P:translation"/>
    <property type="evidence" value="ECO:0007669"/>
    <property type="project" value="UniProtKB-UniRule"/>
</dbReference>
<dbReference type="FunFam" id="1.10.8.50:FF:000001">
    <property type="entry name" value="30S ribosomal protein S13"/>
    <property type="match status" value="1"/>
</dbReference>
<dbReference type="FunFam" id="4.10.910.10:FF:000001">
    <property type="entry name" value="30S ribosomal protein S13"/>
    <property type="match status" value="1"/>
</dbReference>
<dbReference type="Gene3D" id="1.10.8.50">
    <property type="match status" value="1"/>
</dbReference>
<dbReference type="Gene3D" id="4.10.910.10">
    <property type="entry name" value="30s ribosomal protein s13, domain 2"/>
    <property type="match status" value="1"/>
</dbReference>
<dbReference type="HAMAP" id="MF_01315">
    <property type="entry name" value="Ribosomal_uS13"/>
    <property type="match status" value="1"/>
</dbReference>
<dbReference type="InterPro" id="IPR027437">
    <property type="entry name" value="Rbsml_uS13_C"/>
</dbReference>
<dbReference type="InterPro" id="IPR001892">
    <property type="entry name" value="Ribosomal_uS13"/>
</dbReference>
<dbReference type="InterPro" id="IPR010979">
    <property type="entry name" value="Ribosomal_uS13-like_H2TH"/>
</dbReference>
<dbReference type="InterPro" id="IPR019980">
    <property type="entry name" value="Ribosomal_uS13_bac-type"/>
</dbReference>
<dbReference type="InterPro" id="IPR018269">
    <property type="entry name" value="Ribosomal_uS13_CS"/>
</dbReference>
<dbReference type="NCBIfam" id="TIGR03631">
    <property type="entry name" value="uS13_bact"/>
    <property type="match status" value="1"/>
</dbReference>
<dbReference type="PANTHER" id="PTHR10871">
    <property type="entry name" value="30S RIBOSOMAL PROTEIN S13/40S RIBOSOMAL PROTEIN S18"/>
    <property type="match status" value="1"/>
</dbReference>
<dbReference type="PANTHER" id="PTHR10871:SF1">
    <property type="entry name" value="SMALL RIBOSOMAL SUBUNIT PROTEIN US13M"/>
    <property type="match status" value="1"/>
</dbReference>
<dbReference type="Pfam" id="PF00416">
    <property type="entry name" value="Ribosomal_S13"/>
    <property type="match status" value="1"/>
</dbReference>
<dbReference type="PIRSF" id="PIRSF002134">
    <property type="entry name" value="Ribosomal_S13"/>
    <property type="match status" value="1"/>
</dbReference>
<dbReference type="SUPFAM" id="SSF46946">
    <property type="entry name" value="S13-like H2TH domain"/>
    <property type="match status" value="1"/>
</dbReference>
<dbReference type="PROSITE" id="PS00646">
    <property type="entry name" value="RIBOSOMAL_S13_1"/>
    <property type="match status" value="1"/>
</dbReference>
<dbReference type="PROSITE" id="PS50159">
    <property type="entry name" value="RIBOSOMAL_S13_2"/>
    <property type="match status" value="1"/>
</dbReference>
<gene>
    <name evidence="1" type="primary">rpsM</name>
    <name type="ordered locus">BCE33L0128</name>
</gene>
<organism>
    <name type="scientific">Bacillus cereus (strain ZK / E33L)</name>
    <dbReference type="NCBI Taxonomy" id="288681"/>
    <lineage>
        <taxon>Bacteria</taxon>
        <taxon>Bacillati</taxon>
        <taxon>Bacillota</taxon>
        <taxon>Bacilli</taxon>
        <taxon>Bacillales</taxon>
        <taxon>Bacillaceae</taxon>
        <taxon>Bacillus</taxon>
        <taxon>Bacillus cereus group</taxon>
    </lineage>
</organism>
<protein>
    <recommendedName>
        <fullName evidence="1">Small ribosomal subunit protein uS13</fullName>
    </recommendedName>
    <alternativeName>
        <fullName evidence="3">30S ribosomal protein S13</fullName>
    </alternativeName>
</protein>
<proteinExistence type="inferred from homology"/>
<keyword id="KW-0687">Ribonucleoprotein</keyword>
<keyword id="KW-0689">Ribosomal protein</keyword>
<keyword id="KW-0694">RNA-binding</keyword>
<keyword id="KW-0699">rRNA-binding</keyword>
<keyword id="KW-0820">tRNA-binding</keyword>